<gene>
    <name type="primary">RASTL-4</name>
</gene>
<feature type="signal peptide" evidence="1">
    <location>
        <begin position="1"/>
        <end position="21"/>
    </location>
</feature>
<feature type="chain" id="PRO_0000034035" description="Thaumatin-like pathogenesis-related protein 4">
    <location>
        <begin position="22"/>
        <end position="169"/>
    </location>
</feature>
<comment type="function">
    <text>Associated with resistance against stem rust fungi.</text>
</comment>
<comment type="similarity">
    <text evidence="2">Belongs to the thaumatin family.</text>
</comment>
<organism>
    <name type="scientific">Avena sativa</name>
    <name type="common">Oat</name>
    <dbReference type="NCBI Taxonomy" id="4498"/>
    <lineage>
        <taxon>Eukaryota</taxon>
        <taxon>Viridiplantae</taxon>
        <taxon>Streptophyta</taxon>
        <taxon>Embryophyta</taxon>
        <taxon>Tracheophyta</taxon>
        <taxon>Spermatophyta</taxon>
        <taxon>Magnoliopsida</taxon>
        <taxon>Liliopsida</taxon>
        <taxon>Poales</taxon>
        <taxon>Poaceae</taxon>
        <taxon>BOP clade</taxon>
        <taxon>Pooideae</taxon>
        <taxon>Poodae</taxon>
        <taxon>Poeae</taxon>
        <taxon>Poeae Chloroplast Group 1 (Aveneae type)</taxon>
        <taxon>Aveninae</taxon>
        <taxon>Avena</taxon>
    </lineage>
</organism>
<dbReference type="EMBL" id="L39777">
    <property type="protein sequence ID" value="AAB09227.1"/>
    <property type="molecule type" value="mRNA"/>
</dbReference>
<dbReference type="SMR" id="P50698"/>
<dbReference type="GO" id="GO:0050832">
    <property type="term" value="P:defense response to fungus"/>
    <property type="evidence" value="ECO:0007669"/>
    <property type="project" value="UniProtKB-KW"/>
</dbReference>
<dbReference type="GO" id="GO:0031640">
    <property type="term" value="P:killing of cells of another organism"/>
    <property type="evidence" value="ECO:0007669"/>
    <property type="project" value="UniProtKB-KW"/>
</dbReference>
<dbReference type="CDD" id="cd09217">
    <property type="entry name" value="TLP-P"/>
    <property type="match status" value="1"/>
</dbReference>
<dbReference type="FunFam" id="2.60.110.10:FF:000005">
    <property type="entry name" value="Osmotin-like protein OSM34"/>
    <property type="match status" value="1"/>
</dbReference>
<dbReference type="Gene3D" id="2.60.110.10">
    <property type="entry name" value="Thaumatin"/>
    <property type="match status" value="1"/>
</dbReference>
<dbReference type="InterPro" id="IPR037176">
    <property type="entry name" value="Osmotin/thaumatin-like_sf"/>
</dbReference>
<dbReference type="InterPro" id="IPR001938">
    <property type="entry name" value="Thaumatin"/>
</dbReference>
<dbReference type="InterPro" id="IPR017949">
    <property type="entry name" value="Thaumatin_CS"/>
</dbReference>
<dbReference type="PANTHER" id="PTHR31048">
    <property type="entry name" value="OS03G0233200 PROTEIN"/>
    <property type="match status" value="1"/>
</dbReference>
<dbReference type="Pfam" id="PF00314">
    <property type="entry name" value="Thaumatin"/>
    <property type="match status" value="1"/>
</dbReference>
<dbReference type="PIRSF" id="PIRSF002703">
    <property type="entry name" value="Thaumatin"/>
    <property type="match status" value="1"/>
</dbReference>
<dbReference type="PRINTS" id="PR00347">
    <property type="entry name" value="THAUMATIN"/>
</dbReference>
<dbReference type="SMART" id="SM00205">
    <property type="entry name" value="THN"/>
    <property type="match status" value="1"/>
</dbReference>
<dbReference type="SUPFAM" id="SSF49870">
    <property type="entry name" value="Osmotin, thaumatin-like protein"/>
    <property type="match status" value="1"/>
</dbReference>
<dbReference type="PROSITE" id="PS00316">
    <property type="entry name" value="THAUMATIN_1"/>
    <property type="match status" value="1"/>
</dbReference>
<dbReference type="PROSITE" id="PS51367">
    <property type="entry name" value="THAUMATIN_2"/>
    <property type="match status" value="1"/>
</dbReference>
<evidence type="ECO:0000255" key="1"/>
<evidence type="ECO:0000255" key="2">
    <source>
        <dbReference type="PROSITE-ProRule" id="PRU00699"/>
    </source>
</evidence>
<accession>P50698</accession>
<protein>
    <recommendedName>
        <fullName>Thaumatin-like pathogenesis-related protein 4</fullName>
    </recommendedName>
</protein>
<name>RST4_AVESA</name>
<sequence length="169" mass="17621">MATSSTVLFLLLAVFAASASAATFTITNNCGYTVWPAAIPVGGGQQLDQGQTWTLNVPAGTNSGRIWGRTGCSFNGGSGSCQTGDCAGALSCTLSGQPATLAEFSIGGEHDYYDISVIDVYNLAMDFSCSTGDALQCRDSSCPDAYHQPDDPKTHSCNTNSNYQITFCP</sequence>
<reference key="1">
    <citation type="journal article" date="1996" name="Mol. Plant Microbe Interact.">
        <title>Isolation and expression of a host response gene family encoding thaumatin-like proteins in incompatible oat-stem rust fungus interactions.</title>
        <authorList>
            <person name="Lin K.C."/>
            <person name="Bushnell W.R."/>
            <person name="Szabo L.J."/>
            <person name="Smith A.G."/>
        </authorList>
    </citation>
    <scope>NUCLEOTIDE SEQUENCE [MRNA]</scope>
    <source>
        <strain>cv. Rodney</strain>
    </source>
</reference>
<keyword id="KW-0929">Antimicrobial</keyword>
<keyword id="KW-0295">Fungicide</keyword>
<keyword id="KW-0568">Pathogenesis-related protein</keyword>
<keyword id="KW-0611">Plant defense</keyword>
<keyword id="KW-0732">Signal</keyword>
<proteinExistence type="evidence at transcript level"/>